<keyword id="KW-0021">Allosteric enzyme</keyword>
<keyword id="KW-0328">Glycosyltransferase</keyword>
<keyword id="KW-0342">GTP-binding</keyword>
<keyword id="KW-0460">Magnesium</keyword>
<keyword id="KW-0547">Nucleotide-binding</keyword>
<keyword id="KW-1185">Reference proteome</keyword>
<keyword id="KW-0808">Transferase</keyword>
<comment type="function">
    <text evidence="1">Catalyzes the conversion of uracil and 5-phospho-alpha-D-ribose 1-diphosphate (PRPP) to UMP and diphosphate.</text>
</comment>
<comment type="catalytic activity">
    <reaction evidence="1">
        <text>UMP + diphosphate = 5-phospho-alpha-D-ribose 1-diphosphate + uracil</text>
        <dbReference type="Rhea" id="RHEA:13017"/>
        <dbReference type="ChEBI" id="CHEBI:17568"/>
        <dbReference type="ChEBI" id="CHEBI:33019"/>
        <dbReference type="ChEBI" id="CHEBI:57865"/>
        <dbReference type="ChEBI" id="CHEBI:58017"/>
        <dbReference type="EC" id="2.4.2.9"/>
    </reaction>
</comment>
<comment type="cofactor">
    <cofactor evidence="1">
        <name>Mg(2+)</name>
        <dbReference type="ChEBI" id="CHEBI:18420"/>
    </cofactor>
    <text evidence="1">Binds 1 Mg(2+) ion per subunit. The magnesium is bound as Mg-PRPP.</text>
</comment>
<comment type="activity regulation">
    <text evidence="1">Allosterically activated by GTP.</text>
</comment>
<comment type="pathway">
    <text evidence="1">Pyrimidine metabolism; UMP biosynthesis via salvage pathway; UMP from uracil: step 1/1.</text>
</comment>
<comment type="similarity">
    <text evidence="1">Belongs to the UPRTase family.</text>
</comment>
<protein>
    <recommendedName>
        <fullName evidence="1">Uracil phosphoribosyltransferase</fullName>
        <ecNumber evidence="1">2.4.2.9</ecNumber>
    </recommendedName>
    <alternativeName>
        <fullName evidence="1">UMP pyrophosphorylase</fullName>
    </alternativeName>
    <alternativeName>
        <fullName evidence="1">UPRTase</fullName>
    </alternativeName>
</protein>
<proteinExistence type="inferred from homology"/>
<reference key="1">
    <citation type="journal article" date="2007" name="J. Bacteriol.">
        <title>Whole-genome analysis of the methyl tert-butyl ether-degrading beta-proteobacterium Methylibium petroleiphilum PM1.</title>
        <authorList>
            <person name="Kane S.R."/>
            <person name="Chakicherla A.Y."/>
            <person name="Chain P.S.G."/>
            <person name="Schmidt R."/>
            <person name="Shin M.W."/>
            <person name="Legler T.C."/>
            <person name="Scow K.M."/>
            <person name="Larimer F.W."/>
            <person name="Lucas S.M."/>
            <person name="Richardson P.M."/>
            <person name="Hristova K.R."/>
        </authorList>
    </citation>
    <scope>NUCLEOTIDE SEQUENCE [LARGE SCALE GENOMIC DNA]</scope>
    <source>
        <strain>ATCC BAA-1232 / LMG 22953 / PM1</strain>
    </source>
</reference>
<accession>A2SGT8</accession>
<gene>
    <name evidence="1" type="primary">upp</name>
    <name type="ordered locus">Mpe_A1818</name>
</gene>
<feature type="chain" id="PRO_1000053741" description="Uracil phosphoribosyltransferase">
    <location>
        <begin position="1"/>
        <end position="209"/>
    </location>
</feature>
<feature type="binding site" evidence="1">
    <location>
        <position position="78"/>
    </location>
    <ligand>
        <name>5-phospho-alpha-D-ribose 1-diphosphate</name>
        <dbReference type="ChEBI" id="CHEBI:58017"/>
    </ligand>
</feature>
<feature type="binding site" evidence="1">
    <location>
        <position position="103"/>
    </location>
    <ligand>
        <name>5-phospho-alpha-D-ribose 1-diphosphate</name>
        <dbReference type="ChEBI" id="CHEBI:58017"/>
    </ligand>
</feature>
<feature type="binding site" evidence="1">
    <location>
        <begin position="130"/>
        <end position="138"/>
    </location>
    <ligand>
        <name>5-phospho-alpha-D-ribose 1-diphosphate</name>
        <dbReference type="ChEBI" id="CHEBI:58017"/>
    </ligand>
</feature>
<feature type="binding site" evidence="1">
    <location>
        <position position="193"/>
    </location>
    <ligand>
        <name>uracil</name>
        <dbReference type="ChEBI" id="CHEBI:17568"/>
    </ligand>
</feature>
<feature type="binding site" evidence="1">
    <location>
        <begin position="198"/>
        <end position="200"/>
    </location>
    <ligand>
        <name>uracil</name>
        <dbReference type="ChEBI" id="CHEBI:17568"/>
    </ligand>
</feature>
<feature type="binding site" evidence="1">
    <location>
        <position position="199"/>
    </location>
    <ligand>
        <name>5-phospho-alpha-D-ribose 1-diphosphate</name>
        <dbReference type="ChEBI" id="CHEBI:58017"/>
    </ligand>
</feature>
<dbReference type="EC" id="2.4.2.9" evidence="1"/>
<dbReference type="EMBL" id="CP000555">
    <property type="protein sequence ID" value="ABM94777.1"/>
    <property type="molecule type" value="Genomic_DNA"/>
</dbReference>
<dbReference type="RefSeq" id="WP_011829414.1">
    <property type="nucleotide sequence ID" value="NC_008825.1"/>
</dbReference>
<dbReference type="SMR" id="A2SGT8"/>
<dbReference type="STRING" id="420662.Mpe_A1818"/>
<dbReference type="KEGG" id="mpt:Mpe_A1818"/>
<dbReference type="eggNOG" id="COG0035">
    <property type="taxonomic scope" value="Bacteria"/>
</dbReference>
<dbReference type="HOGENOM" id="CLU_067096_2_2_4"/>
<dbReference type="UniPathway" id="UPA00574">
    <property type="reaction ID" value="UER00636"/>
</dbReference>
<dbReference type="Proteomes" id="UP000000366">
    <property type="component" value="Chromosome"/>
</dbReference>
<dbReference type="GO" id="GO:0005525">
    <property type="term" value="F:GTP binding"/>
    <property type="evidence" value="ECO:0007669"/>
    <property type="project" value="UniProtKB-KW"/>
</dbReference>
<dbReference type="GO" id="GO:0000287">
    <property type="term" value="F:magnesium ion binding"/>
    <property type="evidence" value="ECO:0007669"/>
    <property type="project" value="UniProtKB-UniRule"/>
</dbReference>
<dbReference type="GO" id="GO:0004845">
    <property type="term" value="F:uracil phosphoribosyltransferase activity"/>
    <property type="evidence" value="ECO:0007669"/>
    <property type="project" value="UniProtKB-UniRule"/>
</dbReference>
<dbReference type="GO" id="GO:0044206">
    <property type="term" value="P:UMP salvage"/>
    <property type="evidence" value="ECO:0007669"/>
    <property type="project" value="UniProtKB-UniRule"/>
</dbReference>
<dbReference type="GO" id="GO:0006223">
    <property type="term" value="P:uracil salvage"/>
    <property type="evidence" value="ECO:0007669"/>
    <property type="project" value="InterPro"/>
</dbReference>
<dbReference type="CDD" id="cd06223">
    <property type="entry name" value="PRTases_typeI"/>
    <property type="match status" value="1"/>
</dbReference>
<dbReference type="FunFam" id="3.40.50.2020:FF:000003">
    <property type="entry name" value="Uracil phosphoribosyltransferase"/>
    <property type="match status" value="1"/>
</dbReference>
<dbReference type="Gene3D" id="3.40.50.2020">
    <property type="match status" value="1"/>
</dbReference>
<dbReference type="HAMAP" id="MF_01218_B">
    <property type="entry name" value="Upp_B"/>
    <property type="match status" value="1"/>
</dbReference>
<dbReference type="InterPro" id="IPR000836">
    <property type="entry name" value="PRibTrfase_dom"/>
</dbReference>
<dbReference type="InterPro" id="IPR029057">
    <property type="entry name" value="PRTase-like"/>
</dbReference>
<dbReference type="InterPro" id="IPR034332">
    <property type="entry name" value="Upp_B"/>
</dbReference>
<dbReference type="InterPro" id="IPR050054">
    <property type="entry name" value="UPRTase/APRTase"/>
</dbReference>
<dbReference type="InterPro" id="IPR005765">
    <property type="entry name" value="Ura_phspho_trans"/>
</dbReference>
<dbReference type="NCBIfam" id="NF001097">
    <property type="entry name" value="PRK00129.1"/>
    <property type="match status" value="1"/>
</dbReference>
<dbReference type="NCBIfam" id="TIGR01091">
    <property type="entry name" value="upp"/>
    <property type="match status" value="1"/>
</dbReference>
<dbReference type="PANTHER" id="PTHR32315">
    <property type="entry name" value="ADENINE PHOSPHORIBOSYLTRANSFERASE"/>
    <property type="match status" value="1"/>
</dbReference>
<dbReference type="PANTHER" id="PTHR32315:SF4">
    <property type="entry name" value="URACIL PHOSPHORIBOSYLTRANSFERASE, CHLOROPLASTIC"/>
    <property type="match status" value="1"/>
</dbReference>
<dbReference type="Pfam" id="PF14681">
    <property type="entry name" value="UPRTase"/>
    <property type="match status" value="1"/>
</dbReference>
<dbReference type="SUPFAM" id="SSF53271">
    <property type="entry name" value="PRTase-like"/>
    <property type="match status" value="1"/>
</dbReference>
<evidence type="ECO:0000255" key="1">
    <source>
        <dbReference type="HAMAP-Rule" id="MF_01218"/>
    </source>
</evidence>
<organism>
    <name type="scientific">Methylibium petroleiphilum (strain ATCC BAA-1232 / LMG 22953 / PM1)</name>
    <dbReference type="NCBI Taxonomy" id="420662"/>
    <lineage>
        <taxon>Bacteria</taxon>
        <taxon>Pseudomonadati</taxon>
        <taxon>Pseudomonadota</taxon>
        <taxon>Betaproteobacteria</taxon>
        <taxon>Burkholderiales</taxon>
        <taxon>Sphaerotilaceae</taxon>
        <taxon>Methylibium</taxon>
    </lineage>
</organism>
<sequence length="209" mass="22537">MPVLEVLHPLVRHKVGLLRAADISTKKFREITAEIARLLAYEATADFPLEQVTVECWSGPTAVDQIKGKKVTIVPILRAGLGMMDGVLDMIPNAKISVVGLSRNHDTLQPEHYFENLVGSLEERTALIIDPMLATAGSMIATVDLLKRKGCRDIRALVLVAAPEGVKALSAAHPEVRCWTAAIDSHLNEVGYIIPGLGDAGDKIFGTKG</sequence>
<name>UPP_METPP</name>